<accession>Q9HTU7</accession>
<feature type="chain" id="PRO_0000175993" description="UPF0178 protein PA5247">
    <location>
        <begin position="1"/>
        <end position="160"/>
    </location>
</feature>
<dbReference type="EMBL" id="AE004091">
    <property type="protein sequence ID" value="AAG08632.1"/>
    <property type="molecule type" value="Genomic_DNA"/>
</dbReference>
<dbReference type="PIR" id="A82990">
    <property type="entry name" value="A82990"/>
</dbReference>
<dbReference type="RefSeq" id="NP_253934.1">
    <property type="nucleotide sequence ID" value="NC_002516.2"/>
</dbReference>
<dbReference type="RefSeq" id="WP_003099218.1">
    <property type="nucleotide sequence ID" value="NZ_QZGE01000002.1"/>
</dbReference>
<dbReference type="FunCoup" id="Q9HTU7">
    <property type="interactions" value="61"/>
</dbReference>
<dbReference type="STRING" id="208964.PA5247"/>
<dbReference type="PaxDb" id="208964-PA5247"/>
<dbReference type="DNASU" id="878653"/>
<dbReference type="GeneID" id="878653"/>
<dbReference type="KEGG" id="pae:PA5247"/>
<dbReference type="PATRIC" id="fig|208964.12.peg.5499"/>
<dbReference type="PseudoCAP" id="PA5247"/>
<dbReference type="HOGENOM" id="CLU_106619_2_1_6"/>
<dbReference type="InParanoid" id="Q9HTU7"/>
<dbReference type="OrthoDB" id="9798918at2"/>
<dbReference type="PhylomeDB" id="Q9HTU7"/>
<dbReference type="BioCyc" id="PAER208964:G1FZ6-5367-MONOMER"/>
<dbReference type="Proteomes" id="UP000002438">
    <property type="component" value="Chromosome"/>
</dbReference>
<dbReference type="CDD" id="cd18720">
    <property type="entry name" value="PIN_YqxD-like"/>
    <property type="match status" value="1"/>
</dbReference>
<dbReference type="HAMAP" id="MF_00489">
    <property type="entry name" value="UPF0178"/>
    <property type="match status" value="1"/>
</dbReference>
<dbReference type="InterPro" id="IPR003791">
    <property type="entry name" value="UPF0178"/>
</dbReference>
<dbReference type="NCBIfam" id="NF001095">
    <property type="entry name" value="PRK00124.1"/>
    <property type="match status" value="1"/>
</dbReference>
<dbReference type="PANTHER" id="PTHR35146">
    <property type="entry name" value="UPF0178 PROTEIN YAII"/>
    <property type="match status" value="1"/>
</dbReference>
<dbReference type="PANTHER" id="PTHR35146:SF1">
    <property type="entry name" value="UPF0178 PROTEIN YAII"/>
    <property type="match status" value="1"/>
</dbReference>
<dbReference type="Pfam" id="PF02639">
    <property type="entry name" value="DUF188"/>
    <property type="match status" value="1"/>
</dbReference>
<keyword id="KW-1185">Reference proteome</keyword>
<name>Y5247_PSEAE</name>
<comment type="similarity">
    <text evidence="1">Belongs to the UPF0178 family.</text>
</comment>
<proteinExistence type="inferred from homology"/>
<gene>
    <name type="ordered locus">PA5247</name>
</gene>
<sequence>MRIWIDADACPKAAKELVCKFALKRKLEVWMVAGQPQVKPPFACVRLVVVESGMDAADDYLVEQAEPGDLAICSDVPLADRLIKKQVAALDPRGREFDARNMGDKLAMRNLMADLRDQGQMGGGQAPYGERDRQAFANALDRLLTRLQREADLRASQPHR</sequence>
<evidence type="ECO:0000305" key="1"/>
<reference key="1">
    <citation type="journal article" date="2000" name="Nature">
        <title>Complete genome sequence of Pseudomonas aeruginosa PAO1, an opportunistic pathogen.</title>
        <authorList>
            <person name="Stover C.K."/>
            <person name="Pham X.-Q.T."/>
            <person name="Erwin A.L."/>
            <person name="Mizoguchi S.D."/>
            <person name="Warrener P."/>
            <person name="Hickey M.J."/>
            <person name="Brinkman F.S.L."/>
            <person name="Hufnagle W.O."/>
            <person name="Kowalik D.J."/>
            <person name="Lagrou M."/>
            <person name="Garber R.L."/>
            <person name="Goltry L."/>
            <person name="Tolentino E."/>
            <person name="Westbrock-Wadman S."/>
            <person name="Yuan Y."/>
            <person name="Brody L.L."/>
            <person name="Coulter S.N."/>
            <person name="Folger K.R."/>
            <person name="Kas A."/>
            <person name="Larbig K."/>
            <person name="Lim R.M."/>
            <person name="Smith K.A."/>
            <person name="Spencer D.H."/>
            <person name="Wong G.K.-S."/>
            <person name="Wu Z."/>
            <person name="Paulsen I.T."/>
            <person name="Reizer J."/>
            <person name="Saier M.H. Jr."/>
            <person name="Hancock R.E.W."/>
            <person name="Lory S."/>
            <person name="Olson M.V."/>
        </authorList>
    </citation>
    <scope>NUCLEOTIDE SEQUENCE [LARGE SCALE GENOMIC DNA]</scope>
    <source>
        <strain>ATCC 15692 / DSM 22644 / CIP 104116 / JCM 14847 / LMG 12228 / 1C / PRS 101 / PAO1</strain>
    </source>
</reference>
<protein>
    <recommendedName>
        <fullName>UPF0178 protein PA5247</fullName>
    </recommendedName>
</protein>
<organism>
    <name type="scientific">Pseudomonas aeruginosa (strain ATCC 15692 / DSM 22644 / CIP 104116 / JCM 14847 / LMG 12228 / 1C / PRS 101 / PAO1)</name>
    <dbReference type="NCBI Taxonomy" id="208964"/>
    <lineage>
        <taxon>Bacteria</taxon>
        <taxon>Pseudomonadati</taxon>
        <taxon>Pseudomonadota</taxon>
        <taxon>Gammaproteobacteria</taxon>
        <taxon>Pseudomonadales</taxon>
        <taxon>Pseudomonadaceae</taxon>
        <taxon>Pseudomonas</taxon>
    </lineage>
</organism>